<evidence type="ECO:0000250" key="1"/>
<evidence type="ECO:0000250" key="2">
    <source>
        <dbReference type="UniProtKB" id="P32485"/>
    </source>
</evidence>
<evidence type="ECO:0000250" key="3">
    <source>
        <dbReference type="UniProtKB" id="Q16539"/>
    </source>
</evidence>
<evidence type="ECO:0000255" key="4">
    <source>
        <dbReference type="PROSITE-ProRule" id="PRU00159"/>
    </source>
</evidence>
<evidence type="ECO:0000255" key="5">
    <source>
        <dbReference type="PROSITE-ProRule" id="PRU10027"/>
    </source>
</evidence>
<evidence type="ECO:0000269" key="6">
    <source>
    </source>
</evidence>
<evidence type="ECO:0000305" key="7"/>
<sequence>MSQEDSSFVKLSVFGNIFQVTTRYTDLQPVGMGAFGLLCSSTDQKSGGPVAIKKVMKPFSAPVLAKRTYRELKLLKHLRHENIISLLDVFISPGEDIYFITELLGTDLHRLLSSRPLERQFVQYFLYQMLRALKFVHPAGVVHRDLKPSNILINENCDLKICDFGLARLQDPQMTGYVSTRYYRAPEIMLTWQEYDSAVDIWSVGCIFAEMIDGRPIFPGKDHVHQLTVITELLGSPPEDVINTITSENTRRFVDALPKRHKISFADRFPNANAEEIDLLEKMLDFNPKKRITAADALAHPYLAPYHDPEDEPTANERFDWSFNDADLPTDQWKVMMYSEILDFHNVDVKSEKDMTPSTTTAGAH</sequence>
<reference key="1">
    <citation type="journal article" date="2013" name="Extremophiles">
        <title>The HOG signal transduction pathway in the halophilic fungus Wallemia ichthyophaga: identification and characterisation of MAP kinases WiHog1A and WiHog1B.</title>
        <authorList>
            <person name="Konte T."/>
            <person name="Plemenitas A."/>
        </authorList>
    </citation>
    <scope>NUCLEOTIDE SEQUENCE [GENOMIC DNA]</scope>
    <scope>FUNCTION</scope>
    <scope>PHOSPHORYLATION</scope>
    <scope>INDUCTION</scope>
    <source>
        <strain>EXF-994 / CBS 113033</strain>
    </source>
</reference>
<reference key="2">
    <citation type="journal article" date="2013" name="BMC Genomics">
        <title>Genome and transcriptome sequencing of the halophilic fungus Wallemia ichthyophaga: haloadaptations present and absent.</title>
        <authorList>
            <person name="Zajc J."/>
            <person name="Liu Y."/>
            <person name="Dai W."/>
            <person name="Yang Z."/>
            <person name="Hu J."/>
            <person name="Gostincar C."/>
            <person name="Gunde-Cimerman N."/>
        </authorList>
    </citation>
    <scope>NUCLEOTIDE SEQUENCE [LARGE SCALE GENOMIC DNA]</scope>
    <source>
        <strain>EXF-994 / CBS 113033</strain>
    </source>
</reference>
<reference key="3">
    <citation type="journal article" date="2007" name="Saline Syst.">
        <title>The MAP kinase HwHog1 from the halophilic black yeast Hortaea werneckii: coping with stresses in solar salterns.</title>
        <authorList>
            <person name="Lenassi M."/>
            <person name="Vaupotic T."/>
            <person name="Gunde-Cimerman N."/>
            <person name="Plemenitas A."/>
        </authorList>
    </citation>
    <scope>NUCLEOTIDE SEQUENCE [GENOMIC DNA] OF 76-338</scope>
    <source>
        <strain>EXF-994 / CBS 113033</strain>
    </source>
</reference>
<dbReference type="EC" id="2.7.11.24" evidence="2"/>
<dbReference type="EMBL" id="JX573532">
    <property type="protein sequence ID" value="AGG39582.1"/>
    <property type="molecule type" value="Genomic_DNA"/>
</dbReference>
<dbReference type="EMBL" id="KE007228">
    <property type="protein sequence ID" value="EOR02032.1"/>
    <property type="status" value="ALT_SEQ"/>
    <property type="molecule type" value="Genomic_DNA"/>
</dbReference>
<dbReference type="EMBL" id="EF158006">
    <property type="protein sequence ID" value="ABN54705.1"/>
    <property type="status" value="ALT_SEQ"/>
    <property type="molecule type" value="Genomic_DNA"/>
</dbReference>
<dbReference type="RefSeq" id="XP_009267199.1">
    <property type="nucleotide sequence ID" value="XM_009268924.1"/>
</dbReference>
<dbReference type="SMR" id="A3EZ55"/>
<dbReference type="STRING" id="1299270.A3EZ55"/>
<dbReference type="GeneID" id="20376660"/>
<dbReference type="KEGG" id="wic:J056_003708"/>
<dbReference type="eggNOG" id="KOG0660">
    <property type="taxonomic scope" value="Eukaryota"/>
</dbReference>
<dbReference type="HOGENOM" id="CLU_521951_0_0_1"/>
<dbReference type="OrthoDB" id="839696at5204"/>
<dbReference type="Proteomes" id="UP000014064">
    <property type="component" value="Unassembled WGS sequence"/>
</dbReference>
<dbReference type="GO" id="GO:0005737">
    <property type="term" value="C:cytoplasm"/>
    <property type="evidence" value="ECO:0007669"/>
    <property type="project" value="UniProtKB-SubCell"/>
</dbReference>
<dbReference type="GO" id="GO:0005634">
    <property type="term" value="C:nucleus"/>
    <property type="evidence" value="ECO:0007669"/>
    <property type="project" value="UniProtKB-SubCell"/>
</dbReference>
<dbReference type="GO" id="GO:0005524">
    <property type="term" value="F:ATP binding"/>
    <property type="evidence" value="ECO:0007669"/>
    <property type="project" value="UniProtKB-KW"/>
</dbReference>
<dbReference type="GO" id="GO:0004707">
    <property type="term" value="F:MAP kinase activity"/>
    <property type="evidence" value="ECO:0007669"/>
    <property type="project" value="UniProtKB-EC"/>
</dbReference>
<dbReference type="GO" id="GO:0106310">
    <property type="term" value="F:protein serine kinase activity"/>
    <property type="evidence" value="ECO:0007669"/>
    <property type="project" value="RHEA"/>
</dbReference>
<dbReference type="FunFam" id="1.10.510.10:FF:000049">
    <property type="entry name" value="Mitogen-activated protein kinase"/>
    <property type="match status" value="1"/>
</dbReference>
<dbReference type="FunFam" id="3.30.200.20:FF:000028">
    <property type="entry name" value="Mitogen-activated protein kinase"/>
    <property type="match status" value="1"/>
</dbReference>
<dbReference type="Gene3D" id="3.30.200.20">
    <property type="entry name" value="Phosphorylase Kinase, domain 1"/>
    <property type="match status" value="1"/>
</dbReference>
<dbReference type="Gene3D" id="1.10.510.10">
    <property type="entry name" value="Transferase(Phosphotransferase) domain 1"/>
    <property type="match status" value="1"/>
</dbReference>
<dbReference type="InterPro" id="IPR011009">
    <property type="entry name" value="Kinase-like_dom_sf"/>
</dbReference>
<dbReference type="InterPro" id="IPR050117">
    <property type="entry name" value="MAP_kinase"/>
</dbReference>
<dbReference type="InterPro" id="IPR003527">
    <property type="entry name" value="MAP_kinase_CS"/>
</dbReference>
<dbReference type="InterPro" id="IPR008352">
    <property type="entry name" value="MAPK_p38-like"/>
</dbReference>
<dbReference type="InterPro" id="IPR000719">
    <property type="entry name" value="Prot_kinase_dom"/>
</dbReference>
<dbReference type="InterPro" id="IPR017441">
    <property type="entry name" value="Protein_kinase_ATP_BS"/>
</dbReference>
<dbReference type="InterPro" id="IPR008271">
    <property type="entry name" value="Ser/Thr_kinase_AS"/>
</dbReference>
<dbReference type="PANTHER" id="PTHR24055">
    <property type="entry name" value="MITOGEN-ACTIVATED PROTEIN KINASE"/>
    <property type="match status" value="1"/>
</dbReference>
<dbReference type="Pfam" id="PF00069">
    <property type="entry name" value="Pkinase"/>
    <property type="match status" value="1"/>
</dbReference>
<dbReference type="PRINTS" id="PR01773">
    <property type="entry name" value="P38MAPKINASE"/>
</dbReference>
<dbReference type="SMART" id="SM00220">
    <property type="entry name" value="S_TKc"/>
    <property type="match status" value="1"/>
</dbReference>
<dbReference type="SUPFAM" id="SSF56112">
    <property type="entry name" value="Protein kinase-like (PK-like)"/>
    <property type="match status" value="1"/>
</dbReference>
<dbReference type="PROSITE" id="PS01351">
    <property type="entry name" value="MAPK"/>
    <property type="match status" value="1"/>
</dbReference>
<dbReference type="PROSITE" id="PS00107">
    <property type="entry name" value="PROTEIN_KINASE_ATP"/>
    <property type="match status" value="1"/>
</dbReference>
<dbReference type="PROSITE" id="PS50011">
    <property type="entry name" value="PROTEIN_KINASE_DOM"/>
    <property type="match status" value="1"/>
</dbReference>
<dbReference type="PROSITE" id="PS00108">
    <property type="entry name" value="PROTEIN_KINASE_ST"/>
    <property type="match status" value="1"/>
</dbReference>
<name>HOG1A_WALI9</name>
<feature type="chain" id="PRO_0000289706" description="Mitogen-activated protein kinase HOG1A">
    <location>
        <begin position="1"/>
        <end position="365"/>
    </location>
</feature>
<feature type="domain" description="Protein kinase" evidence="4">
    <location>
        <begin position="24"/>
        <end position="303"/>
    </location>
</feature>
<feature type="short sequence motif" description="TXY">
    <location>
        <begin position="175"/>
        <end position="177"/>
    </location>
</feature>
<feature type="active site" description="Proton acceptor" evidence="4 5">
    <location>
        <position position="145"/>
    </location>
</feature>
<feature type="binding site" evidence="4">
    <location>
        <begin position="30"/>
        <end position="38"/>
    </location>
    <ligand>
        <name>ATP</name>
        <dbReference type="ChEBI" id="CHEBI:30616"/>
    </ligand>
</feature>
<feature type="binding site" evidence="4">
    <location>
        <position position="53"/>
    </location>
    <ligand>
        <name>ATP</name>
        <dbReference type="ChEBI" id="CHEBI:30616"/>
    </ligand>
</feature>
<feature type="modified residue" description="Phosphothreonine" evidence="1">
    <location>
        <position position="175"/>
    </location>
</feature>
<feature type="modified residue" description="Phosphotyrosine" evidence="1">
    <location>
        <position position="177"/>
    </location>
</feature>
<feature type="sequence conflict" description="In Ref. 3; ABN54705." evidence="7" ref="3">
    <original>R</original>
    <variation>K</variation>
    <location>
        <position position="184"/>
    </location>
</feature>
<keyword id="KW-0010">Activator</keyword>
<keyword id="KW-0067">ATP-binding</keyword>
<keyword id="KW-0963">Cytoplasm</keyword>
<keyword id="KW-0418">Kinase</keyword>
<keyword id="KW-0547">Nucleotide-binding</keyword>
<keyword id="KW-0539">Nucleus</keyword>
<keyword id="KW-0597">Phosphoprotein</keyword>
<keyword id="KW-1185">Reference proteome</keyword>
<keyword id="KW-0723">Serine/threonine-protein kinase</keyword>
<keyword id="KW-0804">Transcription</keyword>
<keyword id="KW-0805">Transcription regulation</keyword>
<keyword id="KW-0808">Transferase</keyword>
<accession>A3EZ55</accession>
<accession>M1S3C2</accession>
<accession>R9AIJ2</accession>
<protein>
    <recommendedName>
        <fullName>Mitogen-activated protein kinase HOG1A</fullName>
        <shortName>MAP kinase HOG1A</shortName>
        <ecNumber evidence="2">2.7.11.24</ecNumber>
    </recommendedName>
    <alternativeName>
        <fullName>WiHog1A</fullName>
    </alternativeName>
</protein>
<proteinExistence type="evidence at protein level"/>
<gene>
    <name type="primary">HOG1A</name>
    <name type="ORF">J056_003708</name>
</gene>
<comment type="function">
    <text evidence="6">Proline-directed serine/threonine-protein kinase involved in a signal transduction pathway that is activated by changes in the osmolarity of the extracellular environment. Controls osmotic regulation of transcription of target genes.</text>
</comment>
<comment type="catalytic activity">
    <reaction evidence="2">
        <text>L-seryl-[protein] + ATP = O-phospho-L-seryl-[protein] + ADP + H(+)</text>
        <dbReference type="Rhea" id="RHEA:17989"/>
        <dbReference type="Rhea" id="RHEA-COMP:9863"/>
        <dbReference type="Rhea" id="RHEA-COMP:11604"/>
        <dbReference type="ChEBI" id="CHEBI:15378"/>
        <dbReference type="ChEBI" id="CHEBI:29999"/>
        <dbReference type="ChEBI" id="CHEBI:30616"/>
        <dbReference type="ChEBI" id="CHEBI:83421"/>
        <dbReference type="ChEBI" id="CHEBI:456216"/>
        <dbReference type="EC" id="2.7.11.24"/>
    </reaction>
    <physiologicalReaction direction="left-to-right" evidence="2">
        <dbReference type="Rhea" id="RHEA:17990"/>
    </physiologicalReaction>
</comment>
<comment type="catalytic activity">
    <reaction evidence="2">
        <text>L-threonyl-[protein] + ATP = O-phospho-L-threonyl-[protein] + ADP + H(+)</text>
        <dbReference type="Rhea" id="RHEA:46608"/>
        <dbReference type="Rhea" id="RHEA-COMP:11060"/>
        <dbReference type="Rhea" id="RHEA-COMP:11605"/>
        <dbReference type="ChEBI" id="CHEBI:15378"/>
        <dbReference type="ChEBI" id="CHEBI:30013"/>
        <dbReference type="ChEBI" id="CHEBI:30616"/>
        <dbReference type="ChEBI" id="CHEBI:61977"/>
        <dbReference type="ChEBI" id="CHEBI:456216"/>
        <dbReference type="EC" id="2.7.11.24"/>
    </reaction>
    <physiologicalReaction direction="left-to-right" evidence="2">
        <dbReference type="Rhea" id="RHEA:46609"/>
    </physiologicalReaction>
</comment>
<comment type="cofactor">
    <cofactor evidence="3">
        <name>Mg(2+)</name>
        <dbReference type="ChEBI" id="CHEBI:18420"/>
    </cofactor>
</comment>
<comment type="activity regulation">
    <text evidence="1">Activated by tyrosine and threonine phosphorylation.</text>
</comment>
<comment type="subcellular location">
    <subcellularLocation>
        <location evidence="1">Cytoplasm</location>
    </subcellularLocation>
    <subcellularLocation>
        <location evidence="1">Nucleus</location>
    </subcellularLocation>
</comment>
<comment type="induction">
    <text evidence="6">By hyperosmotic and hypo-osmotic stress. Less induced than isoform HOG1B under the same conditions.</text>
</comment>
<comment type="domain">
    <text>The TXY motif contains the threonine and tyrosine residues whose phosphorylation activates the MAP kinases.</text>
</comment>
<comment type="PTM">
    <text evidence="1 6">Phosphorylated. Dually phosphorylated on Thr-175 and Tyr-177, which activates the enzyme (By similarity). Rapidly dephosphorylated upon either hypo- or hyperosmotic shock.</text>
</comment>
<comment type="similarity">
    <text evidence="4">Belongs to the protein kinase superfamily. Ser/Thr protein kinase family. MAP kinase subfamily. HOG1 sub-subfamily.</text>
</comment>
<comment type="sequence caution" evidence="7">
    <conflict type="miscellaneous discrepancy">
        <sequence resource="EMBL-CDS" id="ABN54705"/>
    </conflict>
    <text>Contains vector sequence in the N- and C-terminal part.</text>
</comment>
<comment type="sequence caution" evidence="7">
    <conflict type="erroneous gene model prediction">
        <sequence resource="EMBL-CDS" id="EOR02032"/>
    </conflict>
</comment>
<organism>
    <name type="scientific">Wallemia ichthyophaga (strain EXF-994 / CBS 113033)</name>
    <dbReference type="NCBI Taxonomy" id="1299270"/>
    <lineage>
        <taxon>Eukaryota</taxon>
        <taxon>Fungi</taxon>
        <taxon>Dikarya</taxon>
        <taxon>Basidiomycota</taxon>
        <taxon>Wallemiomycotina</taxon>
        <taxon>Wallemiomycetes</taxon>
        <taxon>Wallemiales</taxon>
        <taxon>Wallemiaceae</taxon>
        <taxon>Wallemia</taxon>
    </lineage>
</organism>